<accession>P82233</accession>
<organism>
    <name type="scientific">Rana temporaria</name>
    <name type="common">European common frog</name>
    <dbReference type="NCBI Taxonomy" id="8407"/>
    <lineage>
        <taxon>Eukaryota</taxon>
        <taxon>Metazoa</taxon>
        <taxon>Chordata</taxon>
        <taxon>Craniata</taxon>
        <taxon>Vertebrata</taxon>
        <taxon>Euteleostomi</taxon>
        <taxon>Amphibia</taxon>
        <taxon>Batrachia</taxon>
        <taxon>Anura</taxon>
        <taxon>Neobatrachia</taxon>
        <taxon>Ranoidea</taxon>
        <taxon>Ranidae</taxon>
        <taxon>Rana</taxon>
        <taxon>Rana</taxon>
    </lineage>
</organism>
<evidence type="ECO:0000250" key="1"/>
<evidence type="ECO:0000269" key="2">
    <source>
    </source>
</evidence>
<evidence type="ECO:0000269" key="3">
    <source>
    </source>
</evidence>
<evidence type="ECO:0000303" key="4">
    <source>
    </source>
</evidence>
<evidence type="ECO:0000303" key="5">
    <source>
    </source>
</evidence>
<evidence type="ECO:0000305" key="6"/>
<evidence type="ECO:0000305" key="7">
    <source>
    </source>
</evidence>
<evidence type="ECO:0000305" key="8">
    <source>
    </source>
</evidence>
<proteinExistence type="evidence at protein level"/>
<sequence length="17" mass="2028">FITLLLRKFICSITKKC</sequence>
<protein>
    <recommendedName>
        <fullName>Brevinin-1Ta</fullName>
    </recommendedName>
</protein>
<reference key="1">
    <citation type="journal article" date="1998" name="Biopolymers">
        <title>Antimicrobial peptides from amphibian skin: what do they tell us?</title>
        <authorList>
            <person name="Simmaco M."/>
            <person name="Mignogna G."/>
            <person name="Barra D."/>
        </authorList>
    </citation>
    <scope>PROTEIN SEQUENCE</scope>
    <scope>SUBCELLULAR LOCATION</scope>
    <source>
        <tissue evidence="4">Skin secretion</tissue>
    </source>
</reference>
<reference key="2">
    <citation type="journal article" date="2021" name="Anal. Bioanal. Chem.">
        <title>Differentiation of Central Slovenian and Moscow populations of Rana temporaria frogs using peptide biomarkers of temporins family.</title>
        <authorList>
            <person name="Samgina T.Y."/>
            <person name="Vasileva I.D."/>
            <person name="Kovalev S.V."/>
            <person name="Trebse P."/>
            <person name="Torkar G."/>
            <person name="Surin A.K."/>
            <person name="Zubarev R.A."/>
            <person name="Lebedev A.T."/>
        </authorList>
    </citation>
    <scope>PROTEIN SEQUENCE</scope>
    <scope>IDENTIFICATION BY MASS SPECTROMETRY</scope>
    <scope>SUBCELLULAR LOCATION</scope>
    <source>
        <tissue evidence="5">Skin secretion</tissue>
    </source>
</reference>
<comment type="function">
    <text>Antibacterial activity against representative Gram-negative and Gram-positive bacteria and exhibits a very high hemolytic activity.</text>
</comment>
<comment type="subcellular location">
    <subcellularLocation>
        <location evidence="2 3">Secreted</location>
    </subcellularLocation>
</comment>
<comment type="tissue specificity">
    <text evidence="7 8">Expressed by the skin glands.</text>
</comment>
<comment type="mass spectrometry" mass="2024.17" method="Electrospray" evidence="3"/>
<comment type="similarity">
    <text evidence="6">Belongs to the frog skin active peptide (FSAP) family. Brevinin subfamily.</text>
</comment>
<keyword id="KW-0878">Amphibian defense peptide</keyword>
<keyword id="KW-0044">Antibiotic</keyword>
<keyword id="KW-0929">Antimicrobial</keyword>
<keyword id="KW-0204">Cytolysis</keyword>
<keyword id="KW-0903">Direct protein sequencing</keyword>
<keyword id="KW-1015">Disulfide bond</keyword>
<keyword id="KW-0354">Hemolysis</keyword>
<keyword id="KW-0964">Secreted</keyword>
<name>BR1A_RANTE</name>
<dbReference type="GO" id="GO:0005576">
    <property type="term" value="C:extracellular region"/>
    <property type="evidence" value="ECO:0000314"/>
    <property type="project" value="UniProtKB"/>
</dbReference>
<dbReference type="GO" id="GO:0042742">
    <property type="term" value="P:defense response to bacterium"/>
    <property type="evidence" value="ECO:0007669"/>
    <property type="project" value="UniProtKB-KW"/>
</dbReference>
<dbReference type="GO" id="GO:0031640">
    <property type="term" value="P:killing of cells of another organism"/>
    <property type="evidence" value="ECO:0007669"/>
    <property type="project" value="UniProtKB-KW"/>
</dbReference>
<feature type="peptide" id="PRO_0000043551" description="Brevinin-1Ta">
    <location>
        <begin position="1"/>
        <end position="17"/>
    </location>
</feature>
<feature type="disulfide bond" evidence="1">
    <location>
        <begin position="11"/>
        <end position="17"/>
    </location>
</feature>